<dbReference type="EMBL" id="AB019225">
    <property type="protein sequence ID" value="BAB11105.1"/>
    <property type="molecule type" value="Genomic_DNA"/>
</dbReference>
<dbReference type="EMBL" id="CP002688">
    <property type="protein sequence ID" value="AED94661.1"/>
    <property type="molecule type" value="Genomic_DNA"/>
</dbReference>
<dbReference type="RefSeq" id="NP_198945.1">
    <property type="nucleotide sequence ID" value="NM_123494.2"/>
</dbReference>
<dbReference type="SMR" id="Q9FHD4"/>
<dbReference type="STRING" id="3702.Q9FHD4"/>
<dbReference type="GlyCosmos" id="Q9FHD4">
    <property type="glycosylation" value="9 sites, No reported glycans"/>
</dbReference>
<dbReference type="GlyGen" id="Q9FHD4">
    <property type="glycosylation" value="9 sites"/>
</dbReference>
<dbReference type="PaxDb" id="3702-AT5G41290.1"/>
<dbReference type="ProteomicsDB" id="220334"/>
<dbReference type="EnsemblPlants" id="AT5G41290.1">
    <property type="protein sequence ID" value="AT5G41290.1"/>
    <property type="gene ID" value="AT5G41290"/>
</dbReference>
<dbReference type="GeneID" id="834130"/>
<dbReference type="Gramene" id="AT5G41290.1">
    <property type="protein sequence ID" value="AT5G41290.1"/>
    <property type="gene ID" value="AT5G41290"/>
</dbReference>
<dbReference type="KEGG" id="ath:AT5G41290"/>
<dbReference type="Araport" id="AT5G41290"/>
<dbReference type="TAIR" id="AT5G41290"/>
<dbReference type="eggNOG" id="ENOG502QWDY">
    <property type="taxonomic scope" value="Eukaryota"/>
</dbReference>
<dbReference type="HOGENOM" id="CLU_000288_35_0_1"/>
<dbReference type="InParanoid" id="Q9FHD4"/>
<dbReference type="OMA" id="YIHHYCS"/>
<dbReference type="PhylomeDB" id="Q9FHD4"/>
<dbReference type="PRO" id="PR:Q9FHD4"/>
<dbReference type="Proteomes" id="UP000006548">
    <property type="component" value="Chromosome 5"/>
</dbReference>
<dbReference type="ExpressionAtlas" id="Q9FHD4">
    <property type="expression patterns" value="baseline and differential"/>
</dbReference>
<dbReference type="GO" id="GO:0005886">
    <property type="term" value="C:plasma membrane"/>
    <property type="evidence" value="ECO:0007005"/>
    <property type="project" value="TAIR"/>
</dbReference>
<dbReference type="CDD" id="cd23509">
    <property type="entry name" value="Gnk2-like"/>
    <property type="match status" value="2"/>
</dbReference>
<dbReference type="FunFam" id="3.30.430.20:FF:000030">
    <property type="entry name" value="Cysteine-rich repeat secretory protein 9"/>
    <property type="match status" value="1"/>
</dbReference>
<dbReference type="FunFam" id="3.30.430.20:FF:000003">
    <property type="entry name" value="Cysteine-rich RLK (RECEPTOR-like protein kinase) 10"/>
    <property type="match status" value="1"/>
</dbReference>
<dbReference type="Gene3D" id="3.30.430.20">
    <property type="entry name" value="Gnk2 domain, C-X8-C-X2-C motif"/>
    <property type="match status" value="2"/>
</dbReference>
<dbReference type="InterPro" id="IPR002902">
    <property type="entry name" value="GNK2"/>
</dbReference>
<dbReference type="InterPro" id="IPR038408">
    <property type="entry name" value="GNK2_sf"/>
</dbReference>
<dbReference type="PANTHER" id="PTHR32099">
    <property type="entry name" value="CYSTEINE-RICH REPEAT SECRETORY PROTEIN"/>
    <property type="match status" value="1"/>
</dbReference>
<dbReference type="PANTHER" id="PTHR32099:SF85">
    <property type="entry name" value="CYSTEINE-RICH REPEAT SECRETORY PROTEIN 57-RELATED"/>
    <property type="match status" value="1"/>
</dbReference>
<dbReference type="Pfam" id="PF01657">
    <property type="entry name" value="Stress-antifung"/>
    <property type="match status" value="2"/>
</dbReference>
<dbReference type="PROSITE" id="PS51473">
    <property type="entry name" value="GNK2"/>
    <property type="match status" value="2"/>
</dbReference>
<proteinExistence type="inferred from homology"/>
<name>CRR58_ARATH</name>
<protein>
    <recommendedName>
        <fullName>Cysteine-rich repeat secretory protein 58</fullName>
    </recommendedName>
</protein>
<sequence>METTKKLFALLCLFVTMNQAISVSDPDDMETFCMKSSRNTTSNTTYNKNLNTLLSTLSNQSSFANYYNLTTGLASDTVHGMFLCTGDVNRTTCNACVKNATIEIAKNCTNHREAIIYNVDCMVRYSDKFFLTTLETNPSYWWSSNDLIPKSFGKFGQRLSDKMGEVIVRSSLLSSSFTPYYLMDTTRFDNLYDLESIVQCTPDLDPRNCTTCLKLALQELTECCGNQVWAFIYTPNCMVSFDTYNSSLPPLPPPSRSGSFSHRGNNKLLGGMVLAVSVSVFAFLSLV</sequence>
<organism>
    <name type="scientific">Arabidopsis thaliana</name>
    <name type="common">Mouse-ear cress</name>
    <dbReference type="NCBI Taxonomy" id="3702"/>
    <lineage>
        <taxon>Eukaryota</taxon>
        <taxon>Viridiplantae</taxon>
        <taxon>Streptophyta</taxon>
        <taxon>Embryophyta</taxon>
        <taxon>Tracheophyta</taxon>
        <taxon>Spermatophyta</taxon>
        <taxon>Magnoliopsida</taxon>
        <taxon>eudicotyledons</taxon>
        <taxon>Gunneridae</taxon>
        <taxon>Pentapetalae</taxon>
        <taxon>rosids</taxon>
        <taxon>malvids</taxon>
        <taxon>Brassicales</taxon>
        <taxon>Brassicaceae</taxon>
        <taxon>Camelineae</taxon>
        <taxon>Arabidopsis</taxon>
    </lineage>
</organism>
<reference key="1">
    <citation type="journal article" date="2000" name="DNA Res.">
        <title>Structural analysis of Arabidopsis thaliana chromosome 5. X. Sequence features of the regions of 3,076,755 bp covered by sixty P1 and TAC clones.</title>
        <authorList>
            <person name="Sato S."/>
            <person name="Nakamura Y."/>
            <person name="Kaneko T."/>
            <person name="Katoh T."/>
            <person name="Asamizu E."/>
            <person name="Kotani H."/>
            <person name="Tabata S."/>
        </authorList>
    </citation>
    <scope>NUCLEOTIDE SEQUENCE [LARGE SCALE GENOMIC DNA]</scope>
    <source>
        <strain>cv. Columbia</strain>
    </source>
</reference>
<reference key="2">
    <citation type="journal article" date="2017" name="Plant J.">
        <title>Araport11: a complete reannotation of the Arabidopsis thaliana reference genome.</title>
        <authorList>
            <person name="Cheng C.Y."/>
            <person name="Krishnakumar V."/>
            <person name="Chan A.P."/>
            <person name="Thibaud-Nissen F."/>
            <person name="Schobel S."/>
            <person name="Town C.D."/>
        </authorList>
    </citation>
    <scope>GENOME REANNOTATION</scope>
    <source>
        <strain>cv. Columbia</strain>
    </source>
</reference>
<reference key="3">
    <citation type="journal article" date="2001" name="Plant Physiol.">
        <title>A superfamily of proteins with novel cysteine-rich repeats.</title>
        <authorList>
            <person name="Chen Z."/>
        </authorList>
    </citation>
    <scope>GENE FAMILY ORGANIZATION</scope>
    <scope>NOMENCLATURE</scope>
</reference>
<feature type="signal peptide" evidence="1">
    <location>
        <begin position="1"/>
        <end position="20"/>
    </location>
</feature>
<feature type="chain" id="PRO_0000022619" description="Cysteine-rich repeat secretory protein 58">
    <location>
        <begin position="21"/>
        <end position="287"/>
    </location>
</feature>
<feature type="topological domain" description="Extracellular" evidence="1">
    <location>
        <begin position="21"/>
        <end position="267"/>
    </location>
</feature>
<feature type="transmembrane region" description="Helical" evidence="1">
    <location>
        <begin position="268"/>
        <end position="286"/>
    </location>
</feature>
<feature type="topological domain" description="Cytoplasmic" evidence="1">
    <location>
        <position position="287"/>
    </location>
</feature>
<feature type="domain" description="Gnk2-homologous 1" evidence="2">
    <location>
        <begin position="28"/>
        <end position="130"/>
    </location>
</feature>
<feature type="domain" description="Gnk2-homologous 2" evidence="2">
    <location>
        <begin position="135"/>
        <end position="246"/>
    </location>
</feature>
<feature type="glycosylation site" description="N-linked (GlcNAc...) asparagine" evidence="1">
    <location>
        <position position="39"/>
    </location>
</feature>
<feature type="glycosylation site" description="N-linked (GlcNAc...) asparagine" evidence="1">
    <location>
        <position position="43"/>
    </location>
</feature>
<feature type="glycosylation site" description="N-linked (GlcNAc...) asparagine" evidence="1">
    <location>
        <position position="59"/>
    </location>
</feature>
<feature type="glycosylation site" description="N-linked (GlcNAc...) asparagine" evidence="1">
    <location>
        <position position="68"/>
    </location>
</feature>
<feature type="glycosylation site" description="N-linked (GlcNAc...) asparagine" evidence="1">
    <location>
        <position position="89"/>
    </location>
</feature>
<feature type="glycosylation site" description="N-linked (GlcNAc...) asparagine" evidence="1">
    <location>
        <position position="99"/>
    </location>
</feature>
<feature type="glycosylation site" description="N-linked (GlcNAc...) asparagine" evidence="1">
    <location>
        <position position="107"/>
    </location>
</feature>
<feature type="glycosylation site" description="N-linked (GlcNAc...) asparagine" evidence="1">
    <location>
        <position position="208"/>
    </location>
</feature>
<feature type="glycosylation site" description="N-linked (GlcNAc...) asparagine" evidence="1">
    <location>
        <position position="245"/>
    </location>
</feature>
<comment type="subcellular location">
    <subcellularLocation>
        <location evidence="1">Membrane</location>
        <topology evidence="1">Single-pass type I membrane protein</topology>
    </subcellularLocation>
</comment>
<comment type="similarity">
    <text evidence="3">Belongs to the cysteine-rich repeat secretory protein family.</text>
</comment>
<keyword id="KW-0325">Glycoprotein</keyword>
<keyword id="KW-0472">Membrane</keyword>
<keyword id="KW-1185">Reference proteome</keyword>
<keyword id="KW-0677">Repeat</keyword>
<keyword id="KW-0732">Signal</keyword>
<keyword id="KW-0812">Transmembrane</keyword>
<keyword id="KW-1133">Transmembrane helix</keyword>
<gene>
    <name type="primary">CRRSP58</name>
    <name type="ordered locus">At5g41290</name>
    <name type="ORF">K1O13.9</name>
</gene>
<accession>Q9FHD4</accession>
<evidence type="ECO:0000255" key="1"/>
<evidence type="ECO:0000255" key="2">
    <source>
        <dbReference type="PROSITE-ProRule" id="PRU00806"/>
    </source>
</evidence>
<evidence type="ECO:0000305" key="3"/>